<gene>
    <name type="primary">NRDC</name>
</gene>
<proteinExistence type="evidence at protein level"/>
<feature type="chain" id="PRO_0000141649" description="Glutaredoxin">
    <location>
        <begin position="1"/>
        <end position="87"/>
    </location>
</feature>
<feature type="domain" description="Glutaredoxin" evidence="1">
    <location>
        <begin position="1"/>
        <end position="87"/>
    </location>
</feature>
<feature type="disulfide bond" description="Redox-active" evidence="2">
    <location>
        <begin position="14"/>
        <end position="17"/>
    </location>
</feature>
<feature type="mutagenesis site" description="70% loss of ability to be reduced by thioredoxin reductase." evidence="3">
    <original>H</original>
    <variation>S</variation>
    <location>
        <position position="12"/>
    </location>
</feature>
<feature type="mutagenesis site" description="85% loss of ability to be reduced by thioredoxin reductase." evidence="3">
    <original>K</original>
    <variation>S</variation>
    <location>
        <position position="13"/>
    </location>
</feature>
<feature type="mutagenesis site" description="Almost no effect." evidence="3">
    <original>V</original>
    <variation>G</variation>
    <location>
        <position position="15"/>
    </location>
</feature>
<feature type="mutagenesis site" description="Almost no effect. 55% loss of ability to be reduced by thioredoxin reductase; when associated with P-16." evidence="3">
    <original>V</original>
    <variation>P</variation>
    <location>
        <position position="15"/>
    </location>
</feature>
<feature type="mutagenesis site" description="20% loss of ability to be reduced by thioredoxin reductase." evidence="3">
    <original>Y</original>
    <variation>A</variation>
    <location>
        <position position="16"/>
    </location>
</feature>
<feature type="mutagenesis site" description="Complete loss of ability to be reduced by thioredoxin reductase." evidence="3">
    <original>K</original>
    <variation>Q</variation>
    <location>
        <position position="21"/>
    </location>
</feature>
<feature type="mutagenesis site" description="30% loss of ability to be reduced by thioredoxin reductase." evidence="3">
    <original>P</original>
    <variation>A</variation>
    <location>
        <position position="66"/>
    </location>
</feature>
<feature type="mutagenesis site" description="Increased ability to be reduced by thioredoxin reductase." evidence="3">
    <original>D</original>
    <variation>S</variation>
    <location>
        <position position="80"/>
    </location>
</feature>
<feature type="strand" evidence="5">
    <location>
        <begin position="2"/>
        <end position="6"/>
    </location>
</feature>
<feature type="turn" evidence="5">
    <location>
        <begin position="9"/>
        <end position="11"/>
    </location>
</feature>
<feature type="helix" evidence="5">
    <location>
        <begin position="15"/>
        <end position="26"/>
    </location>
</feature>
<feature type="strand" evidence="5">
    <location>
        <begin position="31"/>
        <end position="36"/>
    </location>
</feature>
<feature type="strand" evidence="6">
    <location>
        <begin position="38"/>
        <end position="42"/>
    </location>
</feature>
<feature type="helix" evidence="5">
    <location>
        <begin position="45"/>
        <end position="55"/>
    </location>
</feature>
<feature type="strand" evidence="5">
    <location>
        <begin position="67"/>
        <end position="69"/>
    </location>
</feature>
<feature type="turn" evidence="6">
    <location>
        <begin position="71"/>
        <end position="73"/>
    </location>
</feature>
<feature type="strand" evidence="5">
    <location>
        <begin position="75"/>
        <end position="78"/>
    </location>
</feature>
<feature type="helix" evidence="5">
    <location>
        <begin position="79"/>
        <end position="85"/>
    </location>
</feature>
<evidence type="ECO:0000255" key="1">
    <source>
        <dbReference type="PROSITE-ProRule" id="PRU00686"/>
    </source>
</evidence>
<evidence type="ECO:0000269" key="2">
    <source>
    </source>
</evidence>
<evidence type="ECO:0000269" key="3">
    <source>
    </source>
</evidence>
<evidence type="ECO:0000305" key="4"/>
<evidence type="ECO:0007829" key="5">
    <source>
        <dbReference type="PDB" id="1ABA"/>
    </source>
</evidence>
<evidence type="ECO:0007829" key="6">
    <source>
        <dbReference type="PDB" id="1DE1"/>
    </source>
</evidence>
<name>GLRX_BPT4</name>
<organism>
    <name type="scientific">Enterobacteria phage T4</name>
    <name type="common">Bacteriophage T4</name>
    <dbReference type="NCBI Taxonomy" id="10665"/>
    <lineage>
        <taxon>Viruses</taxon>
        <taxon>Duplodnaviria</taxon>
        <taxon>Heunggongvirae</taxon>
        <taxon>Uroviricota</taxon>
        <taxon>Caudoviricetes</taxon>
        <taxon>Straboviridae</taxon>
        <taxon>Tevenvirinae</taxon>
        <taxon>Tequatrovirus</taxon>
    </lineage>
</organism>
<organismHost>
    <name type="scientific">Escherichia coli</name>
    <dbReference type="NCBI Taxonomy" id="562"/>
</organismHost>
<comment type="function">
    <text evidence="3">Serves as a reducing agent for the phage-induced ribonucleotide reductase, but not for the bacterial ones. This specificity may be the result of sequence differences around the redox-active disulfide bond. The oxidized form accepts electrons from bacterial glutathione and will, in turn, reduce other small disulfides. Can also be reduced by NADPH and by bacterial thioredoxin reductase.</text>
</comment>
<comment type="miscellaneous">
    <text>The disulfide bond functions as an electron carrier in the synthesis of deoxyribonucleotides from the corresponding ribonucleotide.</text>
</comment>
<comment type="similarity">
    <text evidence="4">Belongs to the glutaredoxin family.</text>
</comment>
<comment type="caution">
    <text evidence="4">As it can also be reduced by thioredoxin reductase, it is also known as thioredoxin.</text>
</comment>
<sequence length="87" mass="10050">MFKVYGYDSNIHKCVYCDNAKRLLTVKKQPFEFINIMPEKGVFDDEKIAELLTKLGRDTQIGLTMPQVFAPDGSHIGGFDQLREYFK</sequence>
<keyword id="KW-0002">3D-structure</keyword>
<keyword id="KW-0215">Deoxyribonucleotide synthesis</keyword>
<keyword id="KW-0903">Direct protein sequencing</keyword>
<keyword id="KW-1015">Disulfide bond</keyword>
<keyword id="KW-0249">Electron transport</keyword>
<keyword id="KW-0521">NADP</keyword>
<keyword id="KW-0676">Redox-active center</keyword>
<keyword id="KW-1185">Reference proteome</keyword>
<keyword id="KW-0813">Transport</keyword>
<accession>P00276</accession>
<dbReference type="EMBL" id="M13894">
    <property type="protein sequence ID" value="AAA32529.1"/>
    <property type="molecule type" value="Genomic_DNA"/>
</dbReference>
<dbReference type="EMBL" id="Y00122">
    <property type="status" value="NOT_ANNOTATED_CDS"/>
    <property type="molecule type" value="Genomic_DNA"/>
</dbReference>
<dbReference type="EMBL" id="AF158101">
    <property type="protein sequence ID" value="AAD42626.1"/>
    <property type="molecule type" value="Genomic_DNA"/>
</dbReference>
<dbReference type="PIR" id="A00282">
    <property type="entry name" value="TXBPT4"/>
</dbReference>
<dbReference type="RefSeq" id="NP_049698.1">
    <property type="nucleotide sequence ID" value="NC_000866.4"/>
</dbReference>
<dbReference type="PDB" id="1AAZ">
    <property type="method" value="X-ray"/>
    <property type="resolution" value="2.00 A"/>
    <property type="chains" value="A/B=1-87"/>
</dbReference>
<dbReference type="PDB" id="1ABA">
    <property type="method" value="X-ray"/>
    <property type="resolution" value="1.45 A"/>
    <property type="chains" value="A=1-87"/>
</dbReference>
<dbReference type="PDB" id="1DE1">
    <property type="method" value="NMR"/>
    <property type="chains" value="A=1-87"/>
</dbReference>
<dbReference type="PDB" id="1DE2">
    <property type="method" value="NMR"/>
    <property type="chains" value="A=1-87"/>
</dbReference>
<dbReference type="PDBsum" id="1AAZ"/>
<dbReference type="PDBsum" id="1ABA"/>
<dbReference type="PDBsum" id="1DE1"/>
<dbReference type="PDBsum" id="1DE2"/>
<dbReference type="BMRB" id="P00276"/>
<dbReference type="SMR" id="P00276"/>
<dbReference type="GeneID" id="1258540"/>
<dbReference type="KEGG" id="vg:1258540"/>
<dbReference type="OrthoDB" id="25064at10239"/>
<dbReference type="EvolutionaryTrace" id="P00276"/>
<dbReference type="Proteomes" id="UP000009087">
    <property type="component" value="Segment"/>
</dbReference>
<dbReference type="GO" id="GO:0009263">
    <property type="term" value="P:deoxyribonucleotide biosynthetic process"/>
    <property type="evidence" value="ECO:0007669"/>
    <property type="project" value="UniProtKB-KW"/>
</dbReference>
<dbReference type="Gene3D" id="3.40.30.10">
    <property type="entry name" value="Glutaredoxin"/>
    <property type="match status" value="1"/>
</dbReference>
<dbReference type="InterPro" id="IPR011767">
    <property type="entry name" value="GLR_AS"/>
</dbReference>
<dbReference type="InterPro" id="IPR002109">
    <property type="entry name" value="Glutaredoxin"/>
</dbReference>
<dbReference type="InterPro" id="IPR036249">
    <property type="entry name" value="Thioredoxin-like_sf"/>
</dbReference>
<dbReference type="Pfam" id="PF00462">
    <property type="entry name" value="Glutaredoxin"/>
    <property type="match status" value="1"/>
</dbReference>
<dbReference type="SUPFAM" id="SSF52833">
    <property type="entry name" value="Thioredoxin-like"/>
    <property type="match status" value="1"/>
</dbReference>
<dbReference type="PROSITE" id="PS00195">
    <property type="entry name" value="GLUTAREDOXIN_1"/>
    <property type="match status" value="1"/>
</dbReference>
<dbReference type="PROSITE" id="PS51354">
    <property type="entry name" value="GLUTAREDOXIN_2"/>
    <property type="match status" value="1"/>
</dbReference>
<protein>
    <recommendedName>
        <fullName>Glutaredoxin</fullName>
    </recommendedName>
    <alternativeName>
        <fullName>Thioredoxin</fullName>
    </alternativeName>
</protein>
<reference key="1">
    <citation type="journal article" date="1972" name="J. Biol. Chem.">
        <title>Studies on the structure of T4 thioredoxin. II. Amino acid sequence of the protein and comparison with thioredoxin from Escherichia coli.</title>
        <authorList>
            <person name="Sjoeberg B.-M."/>
            <person name="Holmgren A."/>
        </authorList>
    </citation>
    <scope>PROTEIN SEQUENCE</scope>
</reference>
<reference key="2">
    <citation type="journal article" date="1986" name="J. Virol.">
        <title>Nucleotide sequence and protein overproduction of bacteriophage T4 thioredoxin.</title>
        <authorList>
            <person name="Lemaster D.M."/>
        </authorList>
    </citation>
    <scope>NUCLEOTIDE SEQUENCE [GENOMIC DNA]</scope>
</reference>
<reference key="3">
    <citation type="journal article" date="1987" name="Nucleic Acids Res.">
        <title>Nucleotide sequence and primary structures of gene products coded for by the T4 genome between map positions 48.266 kb and 39.166 kb.</title>
        <authorList>
            <person name="Tomaschewski J."/>
            <person name="Rueger W."/>
        </authorList>
    </citation>
    <scope>NUCLEOTIDE SEQUENCE [GENOMIC DNA]</scope>
</reference>
<reference key="4">
    <citation type="journal article" date="2003" name="Microbiol. Mol. Biol. Rev.">
        <title>Bacteriophage T4 genome.</title>
        <authorList>
            <person name="Miller E.S."/>
            <person name="Kutter E."/>
            <person name="Mosig G."/>
            <person name="Arisaka F."/>
            <person name="Kunisawa T."/>
            <person name="Ruger W."/>
        </authorList>
    </citation>
    <scope>NUCLEOTIDE SEQUENCE [LARGE SCALE GENOMIC DNA]</scope>
</reference>
<reference key="5">
    <citation type="journal article" date="1993" name="J. Biol. Chem.">
        <title>Reduction of mutant phage T4 glutaredoxins by Escherichia coli thioredoxin reductase.</title>
        <authorList>
            <person name="Nikkola M."/>
            <person name="Gleason F.K."/>
            <person name="Eklund H."/>
        </authorList>
    </citation>
    <scope>MUTAGENESIS OF HIS-12; LYS-13; VAL-15; TYR-16; LYS-21; PRO-66 AND ASP-80</scope>
    <scope>FUNCTION</scope>
</reference>
<reference key="6">
    <citation type="journal article" date="1978" name="Proc. Natl. Acad. Sci. U.S.A.">
        <title>Three-dimensional structure of thioredoxin induced by bacteriophage T4.</title>
        <authorList>
            <person name="Soederberg B.-O."/>
            <person name="Sjoeberg B.-M."/>
            <person name="Sonnerstam U."/>
            <person name="Braenden C.-I."/>
        </authorList>
    </citation>
    <scope>X-RAY CRYSTALLOGRAPHY (2.8 ANGSTROMS)</scope>
</reference>
<reference key="7">
    <citation type="journal article" date="2004" name="J. Biomol. NMR">
        <title>Solution structures of reduced and oxidized bacteriophage T4 glutaredoxin.</title>
        <authorList>
            <person name="Wang Y."/>
            <person name="Amegbey G."/>
            <person name="Wishart D.S."/>
        </authorList>
    </citation>
    <scope>STRUCTURE BY NMR</scope>
</reference>